<gene>
    <name type="primary">wza</name>
    <name type="ordered locus">STM2118</name>
</gene>
<protein>
    <recommendedName>
        <fullName>Putative polysaccharide export protein wza</fullName>
    </recommendedName>
</protein>
<comment type="function">
    <text evidence="1">Probably involved in the export of the extracellular polysaccharide colanic acid from the cell to medium.</text>
</comment>
<comment type="pathway">
    <text>Glycan metabolism; exopolysaccharide biosynthesis.</text>
</comment>
<comment type="subcellular location">
    <subcellularLocation>
        <location evidence="1">Cell outer membrane</location>
        <topology evidence="1">Multi-pass membrane protein</topology>
    </subcellularLocation>
</comment>
<comment type="similarity">
    <text evidence="3">Belongs to the BexD/CtrA/VexA family.</text>
</comment>
<comment type="sequence caution" evidence="3">
    <conflict type="erroneous initiation">
        <sequence resource="EMBL-CDS" id="AAG24804"/>
    </conflict>
    <text>Truncated N-terminus.</text>
</comment>
<proteinExistence type="inferred from homology"/>
<reference key="1">
    <citation type="journal article" date="2000" name="FEMS Microbiol. Lett.">
        <title>The colanic acid gene cluster of Salmonella enterica has a complex history.</title>
        <authorList>
            <person name="Stevenson G."/>
            <person name="Lan R."/>
            <person name="Reeves P.R."/>
        </authorList>
    </citation>
    <scope>NUCLEOTIDE SEQUENCE [GENOMIC DNA]</scope>
    <source>
        <strain>LT2</strain>
    </source>
</reference>
<reference key="2">
    <citation type="journal article" date="2001" name="Nature">
        <title>Complete genome sequence of Salmonella enterica serovar Typhimurium LT2.</title>
        <authorList>
            <person name="McClelland M."/>
            <person name="Sanderson K.E."/>
            <person name="Spieth J."/>
            <person name="Clifton S.W."/>
            <person name="Latreille P."/>
            <person name="Courtney L."/>
            <person name="Porwollik S."/>
            <person name="Ali J."/>
            <person name="Dante M."/>
            <person name="Du F."/>
            <person name="Hou S."/>
            <person name="Layman D."/>
            <person name="Leonard S."/>
            <person name="Nguyen C."/>
            <person name="Scott K."/>
            <person name="Holmes A."/>
            <person name="Grewal N."/>
            <person name="Mulvaney E."/>
            <person name="Ryan E."/>
            <person name="Sun H."/>
            <person name="Florea L."/>
            <person name="Miller W."/>
            <person name="Stoneking T."/>
            <person name="Nhan M."/>
            <person name="Waterston R."/>
            <person name="Wilson R.K."/>
        </authorList>
    </citation>
    <scope>NUCLEOTIDE SEQUENCE [LARGE SCALE GENOMIC DNA]</scope>
    <source>
        <strain>LT2 / SGSC1412 / ATCC 700720</strain>
    </source>
</reference>
<organism>
    <name type="scientific">Salmonella typhimurium (strain LT2 / SGSC1412 / ATCC 700720)</name>
    <dbReference type="NCBI Taxonomy" id="99287"/>
    <lineage>
        <taxon>Bacteria</taxon>
        <taxon>Pseudomonadati</taxon>
        <taxon>Pseudomonadota</taxon>
        <taxon>Gammaproteobacteria</taxon>
        <taxon>Enterobacterales</taxon>
        <taxon>Enterobacteriaceae</taxon>
        <taxon>Salmonella</taxon>
    </lineage>
</organism>
<sequence length="379" mass="41703">MMKSKMKLMPLLASLSLISGCTVLPGSNMSTMGKDVIKQQDADFDLDRMVNVYPLTPRLVEQLRPRPNVAQPNMSLDQEIASYQYRVGPGDVLNVTVWDHPELTTPAGQYRSSSDTGNWVQPDGTMFYPYIGKVSVVGKTLSEIRSDITGRLAKYIADPQVDVNIAAFRSQKAYISGQVNKSGQQAITNVPLTVLDAINAAGGLTDMADWRNVVLTHNGKEQRISLQALMQNGDLSQNRLLYPGDILYVPRNDDLKVFVMGEVKKQSTLKMDFSGMTLTEALGNAEGIDLTTSNASGIFVIRPLKGEGGRGGKIANIYQLDMSDATSLVMATEFRLQPYDVVYVTTAPVARWNRLINQLLPTISGVRYMTDTASDIHSW</sequence>
<feature type="signal peptide" evidence="2">
    <location>
        <begin position="1"/>
        <end position="20"/>
    </location>
</feature>
<feature type="chain" id="PRO_0000025225" description="Putative polysaccharide export protein wza">
    <location>
        <begin position="21"/>
        <end position="379"/>
    </location>
</feature>
<feature type="lipid moiety-binding region" description="N-palmitoyl cysteine" evidence="2">
    <location>
        <position position="21"/>
    </location>
</feature>
<feature type="lipid moiety-binding region" description="S-diacylglycerol cysteine" evidence="2">
    <location>
        <position position="21"/>
    </location>
</feature>
<feature type="sequence conflict" description="In Ref. 1; AAG24804." evidence="3" ref="1">
    <original>V</original>
    <variation>W</variation>
    <location>
        <position position="161"/>
    </location>
</feature>
<dbReference type="EMBL" id="AH009899">
    <property type="protein sequence ID" value="AAG24804.1"/>
    <property type="status" value="ALT_INIT"/>
    <property type="molecule type" value="Genomic_DNA"/>
</dbReference>
<dbReference type="EMBL" id="AE006468">
    <property type="protein sequence ID" value="AAL21022.1"/>
    <property type="molecule type" value="Genomic_DNA"/>
</dbReference>
<dbReference type="RefSeq" id="NP_461063.1">
    <property type="nucleotide sequence ID" value="NC_003197.2"/>
</dbReference>
<dbReference type="RefSeq" id="WP_000978077.1">
    <property type="nucleotide sequence ID" value="NC_003197.2"/>
</dbReference>
<dbReference type="SMR" id="Q8ZNQ9"/>
<dbReference type="STRING" id="99287.STM2118"/>
<dbReference type="PaxDb" id="99287-STM2118"/>
<dbReference type="GeneID" id="1253639"/>
<dbReference type="KEGG" id="stm:STM2118"/>
<dbReference type="PATRIC" id="fig|99287.12.peg.2240"/>
<dbReference type="HOGENOM" id="CLU_038343_4_2_6"/>
<dbReference type="OMA" id="GCTIIPG"/>
<dbReference type="PhylomeDB" id="Q8ZNQ9"/>
<dbReference type="BioCyc" id="SENT99287:STM2118-MONOMER"/>
<dbReference type="UniPathway" id="UPA00631"/>
<dbReference type="Proteomes" id="UP000001014">
    <property type="component" value="Chromosome"/>
</dbReference>
<dbReference type="GO" id="GO:0009279">
    <property type="term" value="C:cell outer membrane"/>
    <property type="evidence" value="ECO:0007669"/>
    <property type="project" value="UniProtKB-SubCell"/>
</dbReference>
<dbReference type="GO" id="GO:0046930">
    <property type="term" value="C:pore complex"/>
    <property type="evidence" value="ECO:0007669"/>
    <property type="project" value="UniProtKB-KW"/>
</dbReference>
<dbReference type="GO" id="GO:0015159">
    <property type="term" value="F:polysaccharide transmembrane transporter activity"/>
    <property type="evidence" value="ECO:0000318"/>
    <property type="project" value="GO_Central"/>
</dbReference>
<dbReference type="GO" id="GO:0015288">
    <property type="term" value="F:porin activity"/>
    <property type="evidence" value="ECO:0007669"/>
    <property type="project" value="UniProtKB-KW"/>
</dbReference>
<dbReference type="GO" id="GO:0006811">
    <property type="term" value="P:monoatomic ion transport"/>
    <property type="evidence" value="ECO:0007669"/>
    <property type="project" value="UniProtKB-KW"/>
</dbReference>
<dbReference type="GO" id="GO:0000271">
    <property type="term" value="P:polysaccharide biosynthetic process"/>
    <property type="evidence" value="ECO:0007669"/>
    <property type="project" value="UniProtKB-KW"/>
</dbReference>
<dbReference type="Gene3D" id="1.20.5.70">
    <property type="match status" value="1"/>
</dbReference>
<dbReference type="Gene3D" id="3.10.560.10">
    <property type="entry name" value="Outer membrane lipoprotein wza domain like"/>
    <property type="match status" value="2"/>
</dbReference>
<dbReference type="Gene3D" id="3.30.1950.10">
    <property type="entry name" value="wza like domain"/>
    <property type="match status" value="1"/>
</dbReference>
<dbReference type="InterPro" id="IPR049712">
    <property type="entry name" value="Poly_export"/>
</dbReference>
<dbReference type="InterPro" id="IPR003715">
    <property type="entry name" value="Poly_export_N"/>
</dbReference>
<dbReference type="InterPro" id="IPR054765">
    <property type="entry name" value="SLBB_dom"/>
</dbReference>
<dbReference type="InterPro" id="IPR040716">
    <property type="entry name" value="Wza_C"/>
</dbReference>
<dbReference type="NCBIfam" id="NF011658">
    <property type="entry name" value="PRK15078.1"/>
    <property type="match status" value="1"/>
</dbReference>
<dbReference type="PANTHER" id="PTHR33619">
    <property type="entry name" value="POLYSACCHARIDE EXPORT PROTEIN GFCE-RELATED"/>
    <property type="match status" value="1"/>
</dbReference>
<dbReference type="PANTHER" id="PTHR33619:SF3">
    <property type="entry name" value="POLYSACCHARIDE EXPORT PROTEIN GFCE-RELATED"/>
    <property type="match status" value="1"/>
</dbReference>
<dbReference type="Pfam" id="PF02563">
    <property type="entry name" value="Poly_export"/>
    <property type="match status" value="1"/>
</dbReference>
<dbReference type="Pfam" id="PF22461">
    <property type="entry name" value="SLBB_2"/>
    <property type="match status" value="2"/>
</dbReference>
<dbReference type="Pfam" id="PF18412">
    <property type="entry name" value="Wza_C"/>
    <property type="match status" value="1"/>
</dbReference>
<dbReference type="PROSITE" id="PS51257">
    <property type="entry name" value="PROKAR_LIPOPROTEIN"/>
    <property type="match status" value="1"/>
</dbReference>
<name>WZA_SALTY</name>
<keyword id="KW-0998">Cell outer membrane</keyword>
<keyword id="KW-0270">Exopolysaccharide synthesis</keyword>
<keyword id="KW-0406">Ion transport</keyword>
<keyword id="KW-0449">Lipoprotein</keyword>
<keyword id="KW-0472">Membrane</keyword>
<keyword id="KW-0564">Palmitate</keyword>
<keyword id="KW-0625">Polysaccharide transport</keyword>
<keyword id="KW-0626">Porin</keyword>
<keyword id="KW-1185">Reference proteome</keyword>
<keyword id="KW-0732">Signal</keyword>
<keyword id="KW-0762">Sugar transport</keyword>
<keyword id="KW-0812">Transmembrane</keyword>
<keyword id="KW-1134">Transmembrane beta strand</keyword>
<keyword id="KW-0813">Transport</keyword>
<evidence type="ECO:0000250" key="1"/>
<evidence type="ECO:0000255" key="2">
    <source>
        <dbReference type="PROSITE-ProRule" id="PRU00303"/>
    </source>
</evidence>
<evidence type="ECO:0000305" key="3"/>
<accession>Q8ZNQ9</accession>
<accession>Q9F7B3</accession>